<dbReference type="EC" id="1.3.7.2" evidence="1"/>
<dbReference type="EMBL" id="CP000551">
    <property type="protein sequence ID" value="ABM71085.1"/>
    <property type="molecule type" value="Genomic_DNA"/>
</dbReference>
<dbReference type="RefSeq" id="WP_011819207.1">
    <property type="nucleotide sequence ID" value="NC_008816.1"/>
</dbReference>
<dbReference type="SMR" id="A2BTH4"/>
<dbReference type="STRING" id="146891.A9601_18021"/>
<dbReference type="KEGG" id="pmb:A9601_18021"/>
<dbReference type="eggNOG" id="ENOG502Z8J9">
    <property type="taxonomic scope" value="Bacteria"/>
</dbReference>
<dbReference type="HOGENOM" id="CLU_086208_0_0_3"/>
<dbReference type="OrthoDB" id="527390at2"/>
<dbReference type="Proteomes" id="UP000002590">
    <property type="component" value="Chromosome"/>
</dbReference>
<dbReference type="GO" id="GO:0050617">
    <property type="term" value="F:15,16-dihydrobiliverdin:ferredoxin oxidoreductase activity"/>
    <property type="evidence" value="ECO:0007669"/>
    <property type="project" value="UniProtKB-UniRule"/>
</dbReference>
<dbReference type="GO" id="GO:0050897">
    <property type="term" value="F:cobalt ion binding"/>
    <property type="evidence" value="ECO:0007669"/>
    <property type="project" value="InterPro"/>
</dbReference>
<dbReference type="GO" id="GO:0010024">
    <property type="term" value="P:phytochromobilin biosynthetic process"/>
    <property type="evidence" value="ECO:0007669"/>
    <property type="project" value="InterPro"/>
</dbReference>
<dbReference type="Gene3D" id="3.40.1500.20">
    <property type="match status" value="1"/>
</dbReference>
<dbReference type="HAMAP" id="MF_00792">
    <property type="entry name" value="PebA"/>
    <property type="match status" value="1"/>
</dbReference>
<dbReference type="InterPro" id="IPR023658">
    <property type="entry name" value="DiHydbiliverdin_OxRdtase"/>
</dbReference>
<dbReference type="InterPro" id="IPR009249">
    <property type="entry name" value="Ferredoxin-dep_bilin_Rdtase"/>
</dbReference>
<dbReference type="NCBIfam" id="NF009719">
    <property type="entry name" value="PRK13246.1"/>
    <property type="match status" value="1"/>
</dbReference>
<dbReference type="PANTHER" id="PTHR34557">
    <property type="entry name" value="PHYTOCHROMOBILIN:FERREDOXIN OXIDOREDUCTASE, CHLOROPLASTIC"/>
    <property type="match status" value="1"/>
</dbReference>
<dbReference type="PANTHER" id="PTHR34557:SF1">
    <property type="entry name" value="PHYTOCHROMOBILIN:FERREDOXIN OXIDOREDUCTASE, CHLOROPLASTIC"/>
    <property type="match status" value="1"/>
</dbReference>
<dbReference type="Pfam" id="PF05996">
    <property type="entry name" value="Fe_bilin_red"/>
    <property type="match status" value="1"/>
</dbReference>
<organism>
    <name type="scientific">Prochlorococcus marinus (strain AS9601)</name>
    <dbReference type="NCBI Taxonomy" id="146891"/>
    <lineage>
        <taxon>Bacteria</taxon>
        <taxon>Bacillati</taxon>
        <taxon>Cyanobacteriota</taxon>
        <taxon>Cyanophyceae</taxon>
        <taxon>Synechococcales</taxon>
        <taxon>Prochlorococcaceae</taxon>
        <taxon>Prochlorococcus</taxon>
    </lineage>
</organism>
<evidence type="ECO:0000255" key="1">
    <source>
        <dbReference type="HAMAP-Rule" id="MF_00792"/>
    </source>
</evidence>
<sequence>MFDSLVDFLKTNIDQLNGHEVQISSEFKEHHNEDSKYIIKNWLFSSPEYRKWRITRLDGGKKLQVFNTVAYPNFESELPILGADILWFGTSQKLLAILDYQPLIQESKYLEKYCSSLGIIKEEYSAFDNNKMKNIYDSKKYFSPWVIICRGNKLNLDRDLNDIFHSFVNNYLNIYKSNPVNQFLNSEEIKINQIKYDKYSFEKDPADKLFKSFFGEKWTKKFINKFLFTLNNEIIH</sequence>
<keyword id="KW-0560">Oxidoreductase</keyword>
<reference key="1">
    <citation type="journal article" date="2007" name="PLoS Genet.">
        <title>Patterns and implications of gene gain and loss in the evolution of Prochlorococcus.</title>
        <authorList>
            <person name="Kettler G.C."/>
            <person name="Martiny A.C."/>
            <person name="Huang K."/>
            <person name="Zucker J."/>
            <person name="Coleman M.L."/>
            <person name="Rodrigue S."/>
            <person name="Chen F."/>
            <person name="Lapidus A."/>
            <person name="Ferriera S."/>
            <person name="Johnson J."/>
            <person name="Steglich C."/>
            <person name="Church G.M."/>
            <person name="Richardson P."/>
            <person name="Chisholm S.W."/>
        </authorList>
    </citation>
    <scope>NUCLEOTIDE SEQUENCE [LARGE SCALE GENOMIC DNA]</scope>
    <source>
        <strain>AS9601</strain>
    </source>
</reference>
<feature type="chain" id="PRO_1000046922" description="15,16-dihydrobiliverdin:ferredoxin oxidoreductase">
    <location>
        <begin position="1"/>
        <end position="236"/>
    </location>
</feature>
<gene>
    <name evidence="1" type="primary">pebA</name>
    <name type="ordered locus">A9601_18021</name>
</gene>
<accession>A2BTH4</accession>
<protein>
    <recommendedName>
        <fullName evidence="1">15,16-dihydrobiliverdin:ferredoxin oxidoreductase</fullName>
        <ecNumber evidence="1">1.3.7.2</ecNumber>
    </recommendedName>
</protein>
<comment type="function">
    <text evidence="1">Catalyzes the two-electron reduction of biliverdin IX-alpha at the C15 methine bridge.</text>
</comment>
<comment type="catalytic activity">
    <reaction evidence="1">
        <text>15,16-dihydrobiliverdin + oxidized 2[4Fe-4S]-[ferredoxin] = biliverdin IXalpha + reduced 2[4Fe-4S]-[ferredoxin] + 2 H(+)</text>
        <dbReference type="Rhea" id="RHEA:10168"/>
        <dbReference type="Rhea" id="RHEA-COMP:10002"/>
        <dbReference type="Rhea" id="RHEA-COMP:10004"/>
        <dbReference type="ChEBI" id="CHEBI:15378"/>
        <dbReference type="ChEBI" id="CHEBI:33722"/>
        <dbReference type="ChEBI" id="CHEBI:33723"/>
        <dbReference type="ChEBI" id="CHEBI:57899"/>
        <dbReference type="ChEBI" id="CHEBI:57991"/>
        <dbReference type="EC" id="1.3.7.2"/>
    </reaction>
</comment>
<comment type="similarity">
    <text evidence="1">Belongs to the HY2 family.</text>
</comment>
<name>PEBA_PROMS</name>
<proteinExistence type="inferred from homology"/>